<evidence type="ECO:0000250" key="1"/>
<evidence type="ECO:0000255" key="2"/>
<evidence type="ECO:0000255" key="3">
    <source>
        <dbReference type="PROSITE-ProRule" id="PRU10095"/>
    </source>
</evidence>
<evidence type="ECO:0000269" key="4">
    <source>
    </source>
</evidence>
<evidence type="ECO:0000305" key="5"/>
<comment type="function">
    <text evidence="1">Secreted metalloproteinase that allows assimilation of proteinaceous substrates. Shows high activities on basic nuclear substrates such as histone and protamine (By similarity).</text>
</comment>
<comment type="catalytic activity">
    <reaction>
        <text>Preferential cleavage of bonds with hydrophobic residues in P1'. Also 3-Asn-|-Gln-4 and 8-Gly-|-Ser-9 bonds in insulin B chain.</text>
        <dbReference type="EC" id="3.4.24.39"/>
    </reaction>
</comment>
<comment type="cofactor">
    <cofactor evidence="1">
        <name>Zn(2+)</name>
        <dbReference type="ChEBI" id="CHEBI:29105"/>
    </cofactor>
    <text evidence="1">Binds 1 zinc ion per subunit.</text>
</comment>
<comment type="subcellular location">
    <subcellularLocation>
        <location evidence="4">Secreted</location>
    </subcellularLocation>
</comment>
<comment type="similarity">
    <text evidence="5">Belongs to the peptidase M35 family.</text>
</comment>
<organism>
    <name type="scientific">Emericella nidulans (strain FGSC A4 / ATCC 38163 / CBS 112.46 / NRRL 194 / M139)</name>
    <name type="common">Aspergillus nidulans</name>
    <dbReference type="NCBI Taxonomy" id="227321"/>
    <lineage>
        <taxon>Eukaryota</taxon>
        <taxon>Fungi</taxon>
        <taxon>Dikarya</taxon>
        <taxon>Ascomycota</taxon>
        <taxon>Pezizomycotina</taxon>
        <taxon>Eurotiomycetes</taxon>
        <taxon>Eurotiomycetidae</taxon>
        <taxon>Eurotiales</taxon>
        <taxon>Aspergillaceae</taxon>
        <taxon>Aspergillus</taxon>
        <taxon>Aspergillus subgen. Nidulantes</taxon>
    </lineage>
</organism>
<gene>
    <name type="ORF">AN7962</name>
</gene>
<keyword id="KW-0165">Cleavage on pair of basic residues</keyword>
<keyword id="KW-1015">Disulfide bond</keyword>
<keyword id="KW-0378">Hydrolase</keyword>
<keyword id="KW-0479">Metal-binding</keyword>
<keyword id="KW-0482">Metalloprotease</keyword>
<keyword id="KW-0645">Protease</keyword>
<keyword id="KW-1185">Reference proteome</keyword>
<keyword id="KW-0964">Secreted</keyword>
<keyword id="KW-0732">Signal</keyword>
<keyword id="KW-0862">Zinc</keyword>
<keyword id="KW-0865">Zymogen</keyword>
<sequence>MKFIAPIALLGMFQAASASPVDIKTSNAGLQVTLSQINNTRIKAVVQNTGSEEVTFMHMNFFKDASPVKKVSIFRNNDEVEFQGIKYRVQTDDLSDEVLTSLAPGASFEDEFDIAATSDLSSGGPVTIRSEGIVPLVTEKSVTGSLSYSSNELTIDVDGAEAAKIETVGAQLSKLSKRTRVSSCSGTRATALQTALRNAASLASRAASAASQGGSTFTTFFKSDSSSTRNAVAARLRAVASESSSTSSGSTTYYCTDVYGYCSSNVLAYTLPAYNIIANCDIYYTYLPALTGTCYAQDQATTTLHEFTHAPGVYSPGTDDLGYGYDAATRLSASQALNNADSYALYANAVYLGC</sequence>
<feature type="signal peptide" evidence="2">
    <location>
        <begin position="1"/>
        <end position="19"/>
    </location>
</feature>
<feature type="propeptide" id="PRO_0000407102" evidence="1">
    <location>
        <begin position="20"/>
        <end position="178"/>
    </location>
</feature>
<feature type="chain" id="PRO_0000407103" description="Neutral protease 2 homolog AN7962">
    <location>
        <begin position="179"/>
        <end position="354"/>
    </location>
</feature>
<feature type="active site" evidence="3">
    <location>
        <position position="306"/>
    </location>
</feature>
<feature type="binding site" evidence="3">
    <location>
        <position position="305"/>
    </location>
    <ligand>
        <name>Zn(2+)</name>
        <dbReference type="ChEBI" id="CHEBI:29105"/>
        <note>catalytic</note>
    </ligand>
</feature>
<feature type="binding site" evidence="3">
    <location>
        <position position="309"/>
    </location>
    <ligand>
        <name>Zn(2+)</name>
        <dbReference type="ChEBI" id="CHEBI:29105"/>
        <note>catalytic</note>
    </ligand>
</feature>
<feature type="binding site" evidence="3">
    <location>
        <position position="320"/>
    </location>
    <ligand>
        <name>Zn(2+)</name>
        <dbReference type="ChEBI" id="CHEBI:29105"/>
        <note>catalytic</note>
    </ligand>
</feature>
<feature type="disulfide bond" evidence="1">
    <location>
        <begin position="184"/>
        <end position="255"/>
    </location>
</feature>
<feature type="disulfide bond" evidence="1">
    <location>
        <begin position="262"/>
        <end position="280"/>
    </location>
</feature>
<protein>
    <recommendedName>
        <fullName>Neutral protease 2 homolog AN7962</fullName>
        <ecNumber>3.4.24.39</ecNumber>
    </recommendedName>
    <alternativeName>
        <fullName>Deuterolysin AN7962</fullName>
    </alternativeName>
</protein>
<accession>Q5AUR8</accession>
<accession>C8V5D9</accession>
<name>NPIIA_EMENI</name>
<dbReference type="EC" id="3.4.24.39"/>
<dbReference type="EMBL" id="AACD01000135">
    <property type="protein sequence ID" value="EAA59616.1"/>
    <property type="molecule type" value="Genomic_DNA"/>
</dbReference>
<dbReference type="EMBL" id="BN001302">
    <property type="protein sequence ID" value="CBF73605.1"/>
    <property type="molecule type" value="Genomic_DNA"/>
</dbReference>
<dbReference type="RefSeq" id="XP_681231.1">
    <property type="nucleotide sequence ID" value="XM_676139.1"/>
</dbReference>
<dbReference type="SMR" id="Q5AUR8"/>
<dbReference type="STRING" id="227321.Q5AUR8"/>
<dbReference type="MEROPS" id="M35.002"/>
<dbReference type="EnsemblFungi" id="CBF73605">
    <property type="protein sequence ID" value="CBF73605"/>
    <property type="gene ID" value="ANIA_07962"/>
</dbReference>
<dbReference type="KEGG" id="ani:ANIA_07962"/>
<dbReference type="VEuPathDB" id="FungiDB:AN7962"/>
<dbReference type="eggNOG" id="ENOG502SGF5">
    <property type="taxonomic scope" value="Eukaryota"/>
</dbReference>
<dbReference type="HOGENOM" id="CLU_039313_1_1_1"/>
<dbReference type="InParanoid" id="Q5AUR8"/>
<dbReference type="OMA" id="ANCDLYY"/>
<dbReference type="OrthoDB" id="412874at2759"/>
<dbReference type="Proteomes" id="UP000000560">
    <property type="component" value="Chromosome II"/>
</dbReference>
<dbReference type="GO" id="GO:0005576">
    <property type="term" value="C:extracellular region"/>
    <property type="evidence" value="ECO:0007669"/>
    <property type="project" value="UniProtKB-SubCell"/>
</dbReference>
<dbReference type="GO" id="GO:0046872">
    <property type="term" value="F:metal ion binding"/>
    <property type="evidence" value="ECO:0007669"/>
    <property type="project" value="UniProtKB-KW"/>
</dbReference>
<dbReference type="GO" id="GO:0004222">
    <property type="term" value="F:metalloendopeptidase activity"/>
    <property type="evidence" value="ECO:0007669"/>
    <property type="project" value="InterPro"/>
</dbReference>
<dbReference type="GO" id="GO:0006508">
    <property type="term" value="P:proteolysis"/>
    <property type="evidence" value="ECO:0007669"/>
    <property type="project" value="UniProtKB-KW"/>
</dbReference>
<dbReference type="CDD" id="cd11008">
    <property type="entry name" value="M35_deuterolysin_like"/>
    <property type="match status" value="1"/>
</dbReference>
<dbReference type="Gene3D" id="2.60.40.2970">
    <property type="match status" value="1"/>
</dbReference>
<dbReference type="Gene3D" id="3.40.390.10">
    <property type="entry name" value="Collagenase (Catalytic Domain)"/>
    <property type="match status" value="1"/>
</dbReference>
<dbReference type="InterPro" id="IPR050414">
    <property type="entry name" value="Fungal_M35_metalloproteases"/>
</dbReference>
<dbReference type="InterPro" id="IPR024079">
    <property type="entry name" value="MetalloPept_cat_dom_sf"/>
</dbReference>
<dbReference type="InterPro" id="IPR001384">
    <property type="entry name" value="Peptidase_M35"/>
</dbReference>
<dbReference type="PANTHER" id="PTHR37016">
    <property type="match status" value="1"/>
</dbReference>
<dbReference type="PANTHER" id="PTHR37016:SF3">
    <property type="entry name" value="NEUTRAL PROTEASE 2-RELATED"/>
    <property type="match status" value="1"/>
</dbReference>
<dbReference type="Pfam" id="PF02102">
    <property type="entry name" value="Peptidase_M35"/>
    <property type="match status" value="1"/>
</dbReference>
<dbReference type="PRINTS" id="PR00768">
    <property type="entry name" value="DEUTEROLYSIN"/>
</dbReference>
<dbReference type="SUPFAM" id="SSF55486">
    <property type="entry name" value="Metalloproteases ('zincins'), catalytic domain"/>
    <property type="match status" value="1"/>
</dbReference>
<dbReference type="PROSITE" id="PS00142">
    <property type="entry name" value="ZINC_PROTEASE"/>
    <property type="match status" value="1"/>
</dbReference>
<proteinExistence type="inferred from homology"/>
<reference key="1">
    <citation type="journal article" date="2005" name="Nature">
        <title>Sequencing of Aspergillus nidulans and comparative analysis with A. fumigatus and A. oryzae.</title>
        <authorList>
            <person name="Galagan J.E."/>
            <person name="Calvo S.E."/>
            <person name="Cuomo C."/>
            <person name="Ma L.-J."/>
            <person name="Wortman J.R."/>
            <person name="Batzoglou S."/>
            <person name="Lee S.-I."/>
            <person name="Bastuerkmen M."/>
            <person name="Spevak C.C."/>
            <person name="Clutterbuck J."/>
            <person name="Kapitonov V."/>
            <person name="Jurka J."/>
            <person name="Scazzocchio C."/>
            <person name="Farman M.L."/>
            <person name="Butler J."/>
            <person name="Purcell S."/>
            <person name="Harris S."/>
            <person name="Braus G.H."/>
            <person name="Draht O."/>
            <person name="Busch S."/>
            <person name="D'Enfert C."/>
            <person name="Bouchier C."/>
            <person name="Goldman G.H."/>
            <person name="Bell-Pedersen D."/>
            <person name="Griffiths-Jones S."/>
            <person name="Doonan J.H."/>
            <person name="Yu J."/>
            <person name="Vienken K."/>
            <person name="Pain A."/>
            <person name="Freitag M."/>
            <person name="Selker E.U."/>
            <person name="Archer D.B."/>
            <person name="Penalva M.A."/>
            <person name="Oakley B.R."/>
            <person name="Momany M."/>
            <person name="Tanaka T."/>
            <person name="Kumagai T."/>
            <person name="Asai K."/>
            <person name="Machida M."/>
            <person name="Nierman W.C."/>
            <person name="Denning D.W."/>
            <person name="Caddick M.X."/>
            <person name="Hynes M."/>
            <person name="Paoletti M."/>
            <person name="Fischer R."/>
            <person name="Miller B.L."/>
            <person name="Dyer P.S."/>
            <person name="Sachs M.S."/>
            <person name="Osmani S.A."/>
            <person name="Birren B.W."/>
        </authorList>
    </citation>
    <scope>NUCLEOTIDE SEQUENCE [LARGE SCALE GENOMIC DNA]</scope>
    <source>
        <strain>FGSC A4 / ATCC 38163 / CBS 112.46 / NRRL 194 / M139</strain>
    </source>
</reference>
<reference key="2">
    <citation type="journal article" date="2009" name="Fungal Genet. Biol.">
        <title>The 2008 update of the Aspergillus nidulans genome annotation: a community effort.</title>
        <authorList>
            <person name="Wortman J.R."/>
            <person name="Gilsenan J.M."/>
            <person name="Joardar V."/>
            <person name="Deegan J."/>
            <person name="Clutterbuck J."/>
            <person name="Andersen M.R."/>
            <person name="Archer D."/>
            <person name="Bencina M."/>
            <person name="Braus G."/>
            <person name="Coutinho P."/>
            <person name="von Dohren H."/>
            <person name="Doonan J."/>
            <person name="Driessen A.J."/>
            <person name="Durek P."/>
            <person name="Espeso E."/>
            <person name="Fekete E."/>
            <person name="Flipphi M."/>
            <person name="Estrada C.G."/>
            <person name="Geysens S."/>
            <person name="Goldman G."/>
            <person name="de Groot P.W."/>
            <person name="Hansen K."/>
            <person name="Harris S.D."/>
            <person name="Heinekamp T."/>
            <person name="Helmstaedt K."/>
            <person name="Henrissat B."/>
            <person name="Hofmann G."/>
            <person name="Homan T."/>
            <person name="Horio T."/>
            <person name="Horiuchi H."/>
            <person name="James S."/>
            <person name="Jones M."/>
            <person name="Karaffa L."/>
            <person name="Karanyi Z."/>
            <person name="Kato M."/>
            <person name="Keller N."/>
            <person name="Kelly D.E."/>
            <person name="Kiel J.A."/>
            <person name="Kim J.M."/>
            <person name="van der Klei I.J."/>
            <person name="Klis F.M."/>
            <person name="Kovalchuk A."/>
            <person name="Krasevec N."/>
            <person name="Kubicek C.P."/>
            <person name="Liu B."/>
            <person name="Maccabe A."/>
            <person name="Meyer V."/>
            <person name="Mirabito P."/>
            <person name="Miskei M."/>
            <person name="Mos M."/>
            <person name="Mullins J."/>
            <person name="Nelson D.R."/>
            <person name="Nielsen J."/>
            <person name="Oakley B.R."/>
            <person name="Osmani S.A."/>
            <person name="Pakula T."/>
            <person name="Paszewski A."/>
            <person name="Paulsen I."/>
            <person name="Pilsyk S."/>
            <person name="Pocsi I."/>
            <person name="Punt P.J."/>
            <person name="Ram A.F."/>
            <person name="Ren Q."/>
            <person name="Robellet X."/>
            <person name="Robson G."/>
            <person name="Seiboth B."/>
            <person name="van Solingen P."/>
            <person name="Specht T."/>
            <person name="Sun J."/>
            <person name="Taheri-Talesh N."/>
            <person name="Takeshita N."/>
            <person name="Ussery D."/>
            <person name="vanKuyk P.A."/>
            <person name="Visser H."/>
            <person name="van de Vondervoort P.J."/>
            <person name="de Vries R.P."/>
            <person name="Walton J."/>
            <person name="Xiang X."/>
            <person name="Xiong Y."/>
            <person name="Zeng A.P."/>
            <person name="Brandt B.W."/>
            <person name="Cornell M.J."/>
            <person name="van den Hondel C.A."/>
            <person name="Visser J."/>
            <person name="Oliver S.G."/>
            <person name="Turner G."/>
        </authorList>
    </citation>
    <scope>GENOME REANNOTATION</scope>
    <source>
        <strain>FGSC A4 / ATCC 38163 / CBS 112.46 / NRRL 194 / M139</strain>
    </source>
</reference>
<reference key="3">
    <citation type="journal article" date="2014" name="BMC Genomics">
        <title>Elucidating how the saprophytic fungus Aspergillus nidulans uses the plant polyester suberin as carbon source.</title>
        <authorList>
            <person name="Martins I."/>
            <person name="Hartmann D.O."/>
            <person name="Alves P.C."/>
            <person name="Martins C."/>
            <person name="Garcia H."/>
            <person name="Leclercq C.C."/>
            <person name="Ferreira R."/>
            <person name="He J."/>
            <person name="Renaut J."/>
            <person name="Becker J.D."/>
            <person name="Silva Pereira C."/>
        </authorList>
    </citation>
    <scope>SUBCELLULAR LOCATION</scope>
</reference>